<sequence>MRKSFYTWLMTERNPKSNSPKAILADLAFEESAFPKHTDDFDEVSRFLEEHASFSFNLGDFDSIWQEYLEH</sequence>
<proteinExistence type="inferred from homology"/>
<comment type="similarity">
    <text evidence="1">Belongs to the UPF0346 family.</text>
</comment>
<gene>
    <name type="ordered locus">SPCG_0921</name>
</gene>
<name>Y921_STRPS</name>
<feature type="chain" id="PRO_1000198691" description="UPF0346 protein SPCG_0921">
    <location>
        <begin position="1"/>
        <end position="71"/>
    </location>
</feature>
<organism>
    <name type="scientific">Streptococcus pneumoniae (strain CGSP14)</name>
    <dbReference type="NCBI Taxonomy" id="516950"/>
    <lineage>
        <taxon>Bacteria</taxon>
        <taxon>Bacillati</taxon>
        <taxon>Bacillota</taxon>
        <taxon>Bacilli</taxon>
        <taxon>Lactobacillales</taxon>
        <taxon>Streptococcaceae</taxon>
        <taxon>Streptococcus</taxon>
    </lineage>
</organism>
<accession>B2IPA2</accession>
<dbReference type="EMBL" id="CP001033">
    <property type="protein sequence ID" value="ACB90173.1"/>
    <property type="molecule type" value="Genomic_DNA"/>
</dbReference>
<dbReference type="RefSeq" id="WP_001232085.1">
    <property type="nucleotide sequence ID" value="NC_010582.1"/>
</dbReference>
<dbReference type="SMR" id="B2IPA2"/>
<dbReference type="KEGG" id="spw:SPCG_0921"/>
<dbReference type="HOGENOM" id="CLU_177534_1_0_9"/>
<dbReference type="Gene3D" id="1.10.150.260">
    <property type="entry name" value="YozE SAM-like"/>
    <property type="match status" value="1"/>
</dbReference>
<dbReference type="HAMAP" id="MF_01538">
    <property type="entry name" value="UPF0346"/>
    <property type="match status" value="1"/>
</dbReference>
<dbReference type="InterPro" id="IPR010673">
    <property type="entry name" value="UPF0346"/>
</dbReference>
<dbReference type="InterPro" id="IPR023089">
    <property type="entry name" value="YozE_SAM-like"/>
</dbReference>
<dbReference type="InterPro" id="IPR036806">
    <property type="entry name" value="YozE_SAM-like_sf"/>
</dbReference>
<dbReference type="NCBIfam" id="NF010193">
    <property type="entry name" value="PRK13672.1"/>
    <property type="match status" value="1"/>
</dbReference>
<dbReference type="Pfam" id="PF06855">
    <property type="entry name" value="YozE_SAM_like"/>
    <property type="match status" value="1"/>
</dbReference>
<dbReference type="PIRSF" id="PIRSF037262">
    <property type="entry name" value="UCP037262"/>
    <property type="match status" value="1"/>
</dbReference>
<dbReference type="SUPFAM" id="SSF140652">
    <property type="entry name" value="YozE-like"/>
    <property type="match status" value="1"/>
</dbReference>
<protein>
    <recommendedName>
        <fullName evidence="1">UPF0346 protein SPCG_0921</fullName>
    </recommendedName>
</protein>
<reference key="1">
    <citation type="journal article" date="2009" name="BMC Genomics">
        <title>Genome evolution driven by host adaptations results in a more virulent and antimicrobial-resistant Streptococcus pneumoniae serotype 14.</title>
        <authorList>
            <person name="Ding F."/>
            <person name="Tang P."/>
            <person name="Hsu M.-H."/>
            <person name="Cui P."/>
            <person name="Hu S."/>
            <person name="Yu J."/>
            <person name="Chiu C.-H."/>
        </authorList>
    </citation>
    <scope>NUCLEOTIDE SEQUENCE [LARGE SCALE GENOMIC DNA]</scope>
    <source>
        <strain>CGSP14</strain>
    </source>
</reference>
<evidence type="ECO:0000255" key="1">
    <source>
        <dbReference type="HAMAP-Rule" id="MF_01538"/>
    </source>
</evidence>